<sequence length="711" mass="77115">MLNPIVRKFQYGQHTVTLETGMMARQATAAVMVSMDDTAVFVTVVGQKKAKPGQDFFPLTVNYQERTYAAGRIPGSFFRREGRPSEGETLIARLIDRPIRPLFPEGFVNEVQVIATVVSVNPQVNPDIVAMIGASAALSLSGIPFNGPIGAARVGYINDQYVLNPTQDELKESKLDLVVAGTEAAVLMVESEAELLSEDQMLGAVVFGHEQQQVVIQNINELVKEAGKPRWDWQPEPVNEALNARVAALAEARLSDAYRITDKQERYAQVDVIKSETIATLLAEDETLDENELGEILHAIEKNVVRSRVLAGEPRIDGREKDMIRGLDVRTGVLPRTHGSALFTRGETQALVTATLGTARDAQVLDELMGERTDTFLFHYNFPPYSVGETGMVGSPKRREIGHGRLAKRGVLAVMPDMDKFPYTVRVVSEITESNGSSSMASVCGASLALMDAGVPIKAAVAGIAMGLVKEGDNYVVLSDILGDEDHLGDMDFKVAGSRDGISALQMDIKIEGITKEIMQVALNQAKGARLHILGVMEQAINAPRGDISEFAPRIHTIKINPDKIKDVIGKGGSVIRALTEETGTTIEIEDDGTVKIAATDGEKAKHAIRRIEEITAEIEVGRVYNGKVTRIVDFGAFVAIGGGKEGLVHISQIADKRVEKVTDYLQMGQEVPVKVLEVDRQGRIRLSIKEATEQSQPAAAPEAPAAEQGE</sequence>
<reference key="1">
    <citation type="journal article" date="2009" name="PLoS Genet.">
        <title>Organised genome dynamics in the Escherichia coli species results in highly diverse adaptive paths.</title>
        <authorList>
            <person name="Touchon M."/>
            <person name="Hoede C."/>
            <person name="Tenaillon O."/>
            <person name="Barbe V."/>
            <person name="Baeriswyl S."/>
            <person name="Bidet P."/>
            <person name="Bingen E."/>
            <person name="Bonacorsi S."/>
            <person name="Bouchier C."/>
            <person name="Bouvet O."/>
            <person name="Calteau A."/>
            <person name="Chiapello H."/>
            <person name="Clermont O."/>
            <person name="Cruveiller S."/>
            <person name="Danchin A."/>
            <person name="Diard M."/>
            <person name="Dossat C."/>
            <person name="Karoui M.E."/>
            <person name="Frapy E."/>
            <person name="Garry L."/>
            <person name="Ghigo J.M."/>
            <person name="Gilles A.M."/>
            <person name="Johnson J."/>
            <person name="Le Bouguenec C."/>
            <person name="Lescat M."/>
            <person name="Mangenot S."/>
            <person name="Martinez-Jehanne V."/>
            <person name="Matic I."/>
            <person name="Nassif X."/>
            <person name="Oztas S."/>
            <person name="Petit M.A."/>
            <person name="Pichon C."/>
            <person name="Rouy Z."/>
            <person name="Ruf C.S."/>
            <person name="Schneider D."/>
            <person name="Tourret J."/>
            <person name="Vacherie B."/>
            <person name="Vallenet D."/>
            <person name="Medigue C."/>
            <person name="Rocha E.P.C."/>
            <person name="Denamur E."/>
        </authorList>
    </citation>
    <scope>NUCLEOTIDE SEQUENCE [LARGE SCALE GENOMIC DNA]</scope>
    <source>
        <strain>UMN026 / ExPEC</strain>
    </source>
</reference>
<evidence type="ECO:0000255" key="1">
    <source>
        <dbReference type="HAMAP-Rule" id="MF_01595"/>
    </source>
</evidence>
<evidence type="ECO:0000256" key="2">
    <source>
        <dbReference type="SAM" id="MobiDB-lite"/>
    </source>
</evidence>
<evidence type="ECO:0000305" key="3"/>
<keyword id="KW-0963">Cytoplasm</keyword>
<keyword id="KW-0460">Magnesium</keyword>
<keyword id="KW-0479">Metal-binding</keyword>
<keyword id="KW-0548">Nucleotidyltransferase</keyword>
<keyword id="KW-0694">RNA-binding</keyword>
<keyword id="KW-0808">Transferase</keyword>
<accession>B7NDF0</accession>
<proteinExistence type="inferred from homology"/>
<name>PNP_ECOLU</name>
<gene>
    <name evidence="1" type="primary">pnp</name>
    <name type="ordered locus">ECUMN_3646</name>
</gene>
<dbReference type="EC" id="2.7.7.8" evidence="1"/>
<dbReference type="EMBL" id="CU928163">
    <property type="protein sequence ID" value="CAR14800.1"/>
    <property type="status" value="ALT_INIT"/>
    <property type="molecule type" value="Genomic_DNA"/>
</dbReference>
<dbReference type="RefSeq" id="WP_001298330.1">
    <property type="nucleotide sequence ID" value="NC_011751.1"/>
</dbReference>
<dbReference type="SMR" id="B7NDF0"/>
<dbReference type="STRING" id="585056.ECUMN_3646"/>
<dbReference type="KEGG" id="eum:ECUMN_3646"/>
<dbReference type="PATRIC" id="fig|585056.7.peg.3826"/>
<dbReference type="HOGENOM" id="CLU_004217_2_2_6"/>
<dbReference type="Proteomes" id="UP000007097">
    <property type="component" value="Chromosome"/>
</dbReference>
<dbReference type="GO" id="GO:0005829">
    <property type="term" value="C:cytosol"/>
    <property type="evidence" value="ECO:0007669"/>
    <property type="project" value="TreeGrafter"/>
</dbReference>
<dbReference type="GO" id="GO:0000175">
    <property type="term" value="F:3'-5'-RNA exonuclease activity"/>
    <property type="evidence" value="ECO:0007669"/>
    <property type="project" value="TreeGrafter"/>
</dbReference>
<dbReference type="GO" id="GO:0000287">
    <property type="term" value="F:magnesium ion binding"/>
    <property type="evidence" value="ECO:0007669"/>
    <property type="project" value="UniProtKB-UniRule"/>
</dbReference>
<dbReference type="GO" id="GO:0004654">
    <property type="term" value="F:polyribonucleotide nucleotidyltransferase activity"/>
    <property type="evidence" value="ECO:0007669"/>
    <property type="project" value="UniProtKB-UniRule"/>
</dbReference>
<dbReference type="GO" id="GO:0003723">
    <property type="term" value="F:RNA binding"/>
    <property type="evidence" value="ECO:0007669"/>
    <property type="project" value="UniProtKB-UniRule"/>
</dbReference>
<dbReference type="GO" id="GO:0006402">
    <property type="term" value="P:mRNA catabolic process"/>
    <property type="evidence" value="ECO:0007669"/>
    <property type="project" value="UniProtKB-UniRule"/>
</dbReference>
<dbReference type="GO" id="GO:0006396">
    <property type="term" value="P:RNA processing"/>
    <property type="evidence" value="ECO:0007669"/>
    <property type="project" value="InterPro"/>
</dbReference>
<dbReference type="CDD" id="cd02393">
    <property type="entry name" value="KH-I_PNPase"/>
    <property type="match status" value="1"/>
</dbReference>
<dbReference type="CDD" id="cd11363">
    <property type="entry name" value="RNase_PH_PNPase_1"/>
    <property type="match status" value="1"/>
</dbReference>
<dbReference type="CDD" id="cd11364">
    <property type="entry name" value="RNase_PH_PNPase_2"/>
    <property type="match status" value="1"/>
</dbReference>
<dbReference type="CDD" id="cd04472">
    <property type="entry name" value="S1_PNPase"/>
    <property type="match status" value="1"/>
</dbReference>
<dbReference type="FunFam" id="2.40.50.140:FF:000023">
    <property type="entry name" value="Polyribonucleotide nucleotidyltransferase"/>
    <property type="match status" value="1"/>
</dbReference>
<dbReference type="FunFam" id="3.30.1370.10:FF:000001">
    <property type="entry name" value="Polyribonucleotide nucleotidyltransferase"/>
    <property type="match status" value="1"/>
</dbReference>
<dbReference type="FunFam" id="3.30.230.70:FF:000001">
    <property type="entry name" value="Polyribonucleotide nucleotidyltransferase"/>
    <property type="match status" value="1"/>
</dbReference>
<dbReference type="FunFam" id="3.30.230.70:FF:000002">
    <property type="entry name" value="Polyribonucleotide nucleotidyltransferase"/>
    <property type="match status" value="1"/>
</dbReference>
<dbReference type="Gene3D" id="3.30.230.70">
    <property type="entry name" value="GHMP Kinase, N-terminal domain"/>
    <property type="match status" value="2"/>
</dbReference>
<dbReference type="Gene3D" id="3.30.1370.10">
    <property type="entry name" value="K Homology domain, type 1"/>
    <property type="match status" value="1"/>
</dbReference>
<dbReference type="Gene3D" id="2.40.50.140">
    <property type="entry name" value="Nucleic acid-binding proteins"/>
    <property type="match status" value="1"/>
</dbReference>
<dbReference type="HAMAP" id="MF_01595">
    <property type="entry name" value="PNPase"/>
    <property type="match status" value="1"/>
</dbReference>
<dbReference type="InterPro" id="IPR001247">
    <property type="entry name" value="ExoRNase_PH_dom1"/>
</dbReference>
<dbReference type="InterPro" id="IPR015847">
    <property type="entry name" value="ExoRNase_PH_dom2"/>
</dbReference>
<dbReference type="InterPro" id="IPR036345">
    <property type="entry name" value="ExoRNase_PH_dom2_sf"/>
</dbReference>
<dbReference type="InterPro" id="IPR004087">
    <property type="entry name" value="KH_dom"/>
</dbReference>
<dbReference type="InterPro" id="IPR004088">
    <property type="entry name" value="KH_dom_type_1"/>
</dbReference>
<dbReference type="InterPro" id="IPR036612">
    <property type="entry name" value="KH_dom_type_1_sf"/>
</dbReference>
<dbReference type="InterPro" id="IPR012340">
    <property type="entry name" value="NA-bd_OB-fold"/>
</dbReference>
<dbReference type="InterPro" id="IPR012162">
    <property type="entry name" value="PNPase"/>
</dbReference>
<dbReference type="InterPro" id="IPR027408">
    <property type="entry name" value="PNPase/RNase_PH_dom_sf"/>
</dbReference>
<dbReference type="InterPro" id="IPR015848">
    <property type="entry name" value="PNPase_PH_RNA-bd_bac/org-type"/>
</dbReference>
<dbReference type="InterPro" id="IPR036456">
    <property type="entry name" value="PNPase_PH_RNA-bd_sf"/>
</dbReference>
<dbReference type="InterPro" id="IPR020568">
    <property type="entry name" value="Ribosomal_Su5_D2-typ_SF"/>
</dbReference>
<dbReference type="InterPro" id="IPR003029">
    <property type="entry name" value="S1_domain"/>
</dbReference>
<dbReference type="NCBIfam" id="TIGR03591">
    <property type="entry name" value="polynuc_phos"/>
    <property type="match status" value="1"/>
</dbReference>
<dbReference type="NCBIfam" id="NF008805">
    <property type="entry name" value="PRK11824.1"/>
    <property type="match status" value="1"/>
</dbReference>
<dbReference type="PANTHER" id="PTHR11252">
    <property type="entry name" value="POLYRIBONUCLEOTIDE NUCLEOTIDYLTRANSFERASE"/>
    <property type="match status" value="1"/>
</dbReference>
<dbReference type="PANTHER" id="PTHR11252:SF0">
    <property type="entry name" value="POLYRIBONUCLEOTIDE NUCLEOTIDYLTRANSFERASE 1, MITOCHONDRIAL"/>
    <property type="match status" value="1"/>
</dbReference>
<dbReference type="Pfam" id="PF00013">
    <property type="entry name" value="KH_1"/>
    <property type="match status" value="1"/>
</dbReference>
<dbReference type="Pfam" id="PF03726">
    <property type="entry name" value="PNPase"/>
    <property type="match status" value="1"/>
</dbReference>
<dbReference type="Pfam" id="PF01138">
    <property type="entry name" value="RNase_PH"/>
    <property type="match status" value="2"/>
</dbReference>
<dbReference type="Pfam" id="PF03725">
    <property type="entry name" value="RNase_PH_C"/>
    <property type="match status" value="2"/>
</dbReference>
<dbReference type="Pfam" id="PF00575">
    <property type="entry name" value="S1"/>
    <property type="match status" value="1"/>
</dbReference>
<dbReference type="PIRSF" id="PIRSF005499">
    <property type="entry name" value="PNPase"/>
    <property type="match status" value="1"/>
</dbReference>
<dbReference type="SMART" id="SM00322">
    <property type="entry name" value="KH"/>
    <property type="match status" value="1"/>
</dbReference>
<dbReference type="SMART" id="SM00316">
    <property type="entry name" value="S1"/>
    <property type="match status" value="1"/>
</dbReference>
<dbReference type="SUPFAM" id="SSF54791">
    <property type="entry name" value="Eukaryotic type KH-domain (KH-domain type I)"/>
    <property type="match status" value="1"/>
</dbReference>
<dbReference type="SUPFAM" id="SSF50249">
    <property type="entry name" value="Nucleic acid-binding proteins"/>
    <property type="match status" value="1"/>
</dbReference>
<dbReference type="SUPFAM" id="SSF46915">
    <property type="entry name" value="Polynucleotide phosphorylase/guanosine pentaphosphate synthase (PNPase/GPSI), domain 3"/>
    <property type="match status" value="1"/>
</dbReference>
<dbReference type="SUPFAM" id="SSF55666">
    <property type="entry name" value="Ribonuclease PH domain 2-like"/>
    <property type="match status" value="2"/>
</dbReference>
<dbReference type="SUPFAM" id="SSF54211">
    <property type="entry name" value="Ribosomal protein S5 domain 2-like"/>
    <property type="match status" value="2"/>
</dbReference>
<dbReference type="PROSITE" id="PS50084">
    <property type="entry name" value="KH_TYPE_1"/>
    <property type="match status" value="1"/>
</dbReference>
<dbReference type="PROSITE" id="PS50126">
    <property type="entry name" value="S1"/>
    <property type="match status" value="1"/>
</dbReference>
<organism>
    <name type="scientific">Escherichia coli O17:K52:H18 (strain UMN026 / ExPEC)</name>
    <dbReference type="NCBI Taxonomy" id="585056"/>
    <lineage>
        <taxon>Bacteria</taxon>
        <taxon>Pseudomonadati</taxon>
        <taxon>Pseudomonadota</taxon>
        <taxon>Gammaproteobacteria</taxon>
        <taxon>Enterobacterales</taxon>
        <taxon>Enterobacteriaceae</taxon>
        <taxon>Escherichia</taxon>
    </lineage>
</organism>
<protein>
    <recommendedName>
        <fullName evidence="1">Polyribonucleotide nucleotidyltransferase</fullName>
        <ecNumber evidence="1">2.7.7.8</ecNumber>
    </recommendedName>
    <alternativeName>
        <fullName evidence="1">Polynucleotide phosphorylase</fullName>
        <shortName evidence="1">PNPase</shortName>
    </alternativeName>
</protein>
<feature type="chain" id="PRO_0000381890" description="Polyribonucleotide nucleotidyltransferase">
    <location>
        <begin position="1"/>
        <end position="711"/>
    </location>
</feature>
<feature type="domain" description="KH" evidence="1">
    <location>
        <begin position="553"/>
        <end position="612"/>
    </location>
</feature>
<feature type="domain" description="S1 motif" evidence="1">
    <location>
        <begin position="622"/>
        <end position="690"/>
    </location>
</feature>
<feature type="region of interest" description="Disordered" evidence="2">
    <location>
        <begin position="689"/>
        <end position="711"/>
    </location>
</feature>
<feature type="compositionally biased region" description="Low complexity" evidence="2">
    <location>
        <begin position="694"/>
        <end position="711"/>
    </location>
</feature>
<feature type="binding site" evidence="1">
    <location>
        <position position="486"/>
    </location>
    <ligand>
        <name>Mg(2+)</name>
        <dbReference type="ChEBI" id="CHEBI:18420"/>
    </ligand>
</feature>
<feature type="binding site" evidence="1">
    <location>
        <position position="492"/>
    </location>
    <ligand>
        <name>Mg(2+)</name>
        <dbReference type="ChEBI" id="CHEBI:18420"/>
    </ligand>
</feature>
<comment type="function">
    <text evidence="1">Involved in mRNA degradation. Catalyzes the phosphorolysis of single-stranded polyribonucleotides processively in the 3'- to 5'-direction.</text>
</comment>
<comment type="catalytic activity">
    <reaction evidence="1">
        <text>RNA(n+1) + phosphate = RNA(n) + a ribonucleoside 5'-diphosphate</text>
        <dbReference type="Rhea" id="RHEA:22096"/>
        <dbReference type="Rhea" id="RHEA-COMP:14527"/>
        <dbReference type="Rhea" id="RHEA-COMP:17342"/>
        <dbReference type="ChEBI" id="CHEBI:43474"/>
        <dbReference type="ChEBI" id="CHEBI:57930"/>
        <dbReference type="ChEBI" id="CHEBI:140395"/>
        <dbReference type="EC" id="2.7.7.8"/>
    </reaction>
</comment>
<comment type="cofactor">
    <cofactor evidence="1">
        <name>Mg(2+)</name>
        <dbReference type="ChEBI" id="CHEBI:18420"/>
    </cofactor>
</comment>
<comment type="subunit">
    <text evidence="1">Component of the RNA degradosome, which is a multiprotein complex involved in RNA processing and mRNA degradation.</text>
</comment>
<comment type="subcellular location">
    <subcellularLocation>
        <location evidence="1">Cytoplasm</location>
    </subcellularLocation>
</comment>
<comment type="similarity">
    <text evidence="1">Belongs to the polyribonucleotide nucleotidyltransferase family.</text>
</comment>
<comment type="sequence caution" evidence="3">
    <conflict type="erroneous initiation">
        <sequence resource="EMBL-CDS" id="CAR14800"/>
    </conflict>
</comment>